<accession>Q7WY57</accession>
<feature type="chain" id="PRO_0000097605" description="Bacteriocin-like protein SboX">
    <location>
        <begin position="1"/>
        <end position="50"/>
    </location>
</feature>
<name>SBOX_BACSU</name>
<dbReference type="EMBL" id="AL009126">
    <property type="protein sequence ID" value="CAE01468.1"/>
    <property type="molecule type" value="Genomic_DNA"/>
</dbReference>
<dbReference type="RefSeq" id="WP_010886632.1">
    <property type="nucleotide sequence ID" value="NZ_OZ025638.1"/>
</dbReference>
<dbReference type="RefSeq" id="YP_054594.1">
    <property type="nucleotide sequence ID" value="NC_000964.3"/>
</dbReference>
<dbReference type="FunCoup" id="Q7WY57">
    <property type="interactions" value="21"/>
</dbReference>
<dbReference type="STRING" id="224308.BSU37360"/>
<dbReference type="PaxDb" id="224308-BSU37360"/>
<dbReference type="EnsemblBacteria" id="CAE01468">
    <property type="protein sequence ID" value="CAE01468"/>
    <property type="gene ID" value="BSU_37360"/>
</dbReference>
<dbReference type="GeneID" id="2914193"/>
<dbReference type="KEGG" id="bsu:BSU37360"/>
<dbReference type="InParanoid" id="Q7WY57"/>
<dbReference type="OrthoDB" id="2891669at2"/>
<dbReference type="BioCyc" id="BSUB:BSU37360-MONOMER"/>
<dbReference type="Proteomes" id="UP000001570">
    <property type="component" value="Chromosome"/>
</dbReference>
<gene>
    <name type="primary">sboX</name>
    <name type="ordered locus">BSU37360</name>
</gene>
<organism>
    <name type="scientific">Bacillus subtilis (strain 168)</name>
    <dbReference type="NCBI Taxonomy" id="224308"/>
    <lineage>
        <taxon>Bacteria</taxon>
        <taxon>Bacillati</taxon>
        <taxon>Bacillota</taxon>
        <taxon>Bacilli</taxon>
        <taxon>Bacillales</taxon>
        <taxon>Bacillaceae</taxon>
        <taxon>Bacillus</taxon>
    </lineage>
</organism>
<proteinExistence type="evidence at transcript level"/>
<evidence type="ECO:0000269" key="1">
    <source>
    </source>
</evidence>
<keyword id="KW-1185">Reference proteome</keyword>
<reference key="1">
    <citation type="journal article" date="1997" name="Nature">
        <title>The complete genome sequence of the Gram-positive bacterium Bacillus subtilis.</title>
        <authorList>
            <person name="Kunst F."/>
            <person name="Ogasawara N."/>
            <person name="Moszer I."/>
            <person name="Albertini A.M."/>
            <person name="Alloni G."/>
            <person name="Azevedo V."/>
            <person name="Bertero M.G."/>
            <person name="Bessieres P."/>
            <person name="Bolotin A."/>
            <person name="Borchert S."/>
            <person name="Borriss R."/>
            <person name="Boursier L."/>
            <person name="Brans A."/>
            <person name="Braun M."/>
            <person name="Brignell S.C."/>
            <person name="Bron S."/>
            <person name="Brouillet S."/>
            <person name="Bruschi C.V."/>
            <person name="Caldwell B."/>
            <person name="Capuano V."/>
            <person name="Carter N.M."/>
            <person name="Choi S.-K."/>
            <person name="Codani J.-J."/>
            <person name="Connerton I.F."/>
            <person name="Cummings N.J."/>
            <person name="Daniel R.A."/>
            <person name="Denizot F."/>
            <person name="Devine K.M."/>
            <person name="Duesterhoeft A."/>
            <person name="Ehrlich S.D."/>
            <person name="Emmerson P.T."/>
            <person name="Entian K.-D."/>
            <person name="Errington J."/>
            <person name="Fabret C."/>
            <person name="Ferrari E."/>
            <person name="Foulger D."/>
            <person name="Fritz C."/>
            <person name="Fujita M."/>
            <person name="Fujita Y."/>
            <person name="Fuma S."/>
            <person name="Galizzi A."/>
            <person name="Galleron N."/>
            <person name="Ghim S.-Y."/>
            <person name="Glaser P."/>
            <person name="Goffeau A."/>
            <person name="Golightly E.J."/>
            <person name="Grandi G."/>
            <person name="Guiseppi G."/>
            <person name="Guy B.J."/>
            <person name="Haga K."/>
            <person name="Haiech J."/>
            <person name="Harwood C.R."/>
            <person name="Henaut A."/>
            <person name="Hilbert H."/>
            <person name="Holsappel S."/>
            <person name="Hosono S."/>
            <person name="Hullo M.-F."/>
            <person name="Itaya M."/>
            <person name="Jones L.-M."/>
            <person name="Joris B."/>
            <person name="Karamata D."/>
            <person name="Kasahara Y."/>
            <person name="Klaerr-Blanchard M."/>
            <person name="Klein C."/>
            <person name="Kobayashi Y."/>
            <person name="Koetter P."/>
            <person name="Koningstein G."/>
            <person name="Krogh S."/>
            <person name="Kumano M."/>
            <person name="Kurita K."/>
            <person name="Lapidus A."/>
            <person name="Lardinois S."/>
            <person name="Lauber J."/>
            <person name="Lazarevic V."/>
            <person name="Lee S.-M."/>
            <person name="Levine A."/>
            <person name="Liu H."/>
            <person name="Masuda S."/>
            <person name="Mauel C."/>
            <person name="Medigue C."/>
            <person name="Medina N."/>
            <person name="Mellado R.P."/>
            <person name="Mizuno M."/>
            <person name="Moestl D."/>
            <person name="Nakai S."/>
            <person name="Noback M."/>
            <person name="Noone D."/>
            <person name="O'Reilly M."/>
            <person name="Ogawa K."/>
            <person name="Ogiwara A."/>
            <person name="Oudega B."/>
            <person name="Park S.-H."/>
            <person name="Parro V."/>
            <person name="Pohl T.M."/>
            <person name="Portetelle D."/>
            <person name="Porwollik S."/>
            <person name="Prescott A.M."/>
            <person name="Presecan E."/>
            <person name="Pujic P."/>
            <person name="Purnelle B."/>
            <person name="Rapoport G."/>
            <person name="Rey M."/>
            <person name="Reynolds S."/>
            <person name="Rieger M."/>
            <person name="Rivolta C."/>
            <person name="Rocha E."/>
            <person name="Roche B."/>
            <person name="Rose M."/>
            <person name="Sadaie Y."/>
            <person name="Sato T."/>
            <person name="Scanlan E."/>
            <person name="Schleich S."/>
            <person name="Schroeter R."/>
            <person name="Scoffone F."/>
            <person name="Sekiguchi J."/>
            <person name="Sekowska A."/>
            <person name="Seror S.J."/>
            <person name="Serror P."/>
            <person name="Shin B.-S."/>
            <person name="Soldo B."/>
            <person name="Sorokin A."/>
            <person name="Tacconi E."/>
            <person name="Takagi T."/>
            <person name="Takahashi H."/>
            <person name="Takemaru K."/>
            <person name="Takeuchi M."/>
            <person name="Tamakoshi A."/>
            <person name="Tanaka T."/>
            <person name="Terpstra P."/>
            <person name="Tognoni A."/>
            <person name="Tosato V."/>
            <person name="Uchiyama S."/>
            <person name="Vandenbol M."/>
            <person name="Vannier F."/>
            <person name="Vassarotti A."/>
            <person name="Viari A."/>
            <person name="Wambutt R."/>
            <person name="Wedler E."/>
            <person name="Wedler H."/>
            <person name="Weitzenegger T."/>
            <person name="Winters P."/>
            <person name="Wipat A."/>
            <person name="Yamamoto H."/>
            <person name="Yamane K."/>
            <person name="Yasumoto K."/>
            <person name="Yata K."/>
            <person name="Yoshida K."/>
            <person name="Yoshikawa H.-F."/>
            <person name="Zumstein E."/>
            <person name="Yoshikawa H."/>
            <person name="Danchin A."/>
        </authorList>
    </citation>
    <scope>NUCLEOTIDE SEQUENCE [LARGE SCALE GENOMIC DNA]</scope>
    <source>
        <strain>168</strain>
    </source>
</reference>
<reference key="2">
    <citation type="journal article" date="2000" name="J. Bacteriol.">
        <title>Mutational analysis of the sbo-alb locus of Bacillus subtilis: identification of genes required for subtilosin production and immunity.</title>
        <authorList>
            <person name="Zheng G."/>
            <person name="Hehn R."/>
            <person name="Zuber P."/>
        </authorList>
    </citation>
    <scope>IDENTIFICATION</scope>
    <scope>INDUCTION</scope>
    <source>
        <strain>168 / JH642</strain>
    </source>
</reference>
<sequence length="50" mass="5794">MKLPVQQVYSVYGGKDLPKGHSHSTMPFLSKLQFLTKIYLLDIHTQPFFI</sequence>
<comment type="induction">
    <text evidence="1">In stationary phase of anaerobic cultures.</text>
</comment>
<comment type="miscellaneous">
    <text>Overlaps sboA.</text>
</comment>
<protein>
    <recommendedName>
        <fullName>Bacteriocin-like protein SboX</fullName>
    </recommendedName>
</protein>